<proteinExistence type="evidence at transcript level"/>
<reference key="1">
    <citation type="journal article" date="1996" name="Plant Mol. Biol.">
        <title>Genomic structure of the rice aldolase isozyme C-1 gene and its regulation through a Ca 2+ -mediated protein kinase-phosphatase pathway.</title>
        <authorList>
            <person name="Nakamura H."/>
            <person name="Satoh W."/>
            <person name="Hidaka S."/>
            <person name="Kagaya Y."/>
            <person name="Ejiri S."/>
            <person name="Tsutsumi K."/>
        </authorList>
    </citation>
    <scope>NUCLEOTIDE SEQUENCE [GENOMIC DNA / MRNA]</scope>
</reference>
<reference key="2">
    <citation type="submission" date="2006-11" db="EMBL/GenBank/DDBJ databases">
        <title>Molecular cloning of fructose-bisphosphate aldolase genes in rice seeds.</title>
        <authorList>
            <person name="Yoon U.H."/>
            <person name="Kim Y.H."/>
        </authorList>
    </citation>
    <scope>NUCLEOTIDE SEQUENCE [MRNA]</scope>
    <source>
        <strain>cv. Ilpoombyeo</strain>
        <tissue>Seed</tissue>
    </source>
</reference>
<reference key="3">
    <citation type="submission" date="2009-08" db="EMBL/GenBank/DDBJ databases">
        <title>Structural and expression analysis of germinating seed genes in Oryza sativa L.</title>
        <authorList>
            <person name="Yoon U.H."/>
            <person name="Kim Y.H."/>
        </authorList>
    </citation>
    <scope>NUCLEOTIDE SEQUENCE [MRNA]</scope>
    <source>
        <strain>cv. Ilpoombyeo</strain>
    </source>
</reference>
<reference key="4">
    <citation type="submission" date="2011-06" db="EMBL/GenBank/DDBJ databases">
        <title>Oryza sativa japonica group fructose-bisphosphate aldolase mRNA.</title>
        <authorList>
            <person name="Chang A."/>
        </authorList>
    </citation>
    <scope>NUCLEOTIDE SEQUENCE [MRNA]</scope>
    <source>
        <strain>cv. Nakdong</strain>
        <tissue>Leaf</tissue>
    </source>
</reference>
<reference key="5">
    <citation type="journal article" date="2002" name="Nature">
        <title>The genome sequence and structure of rice chromosome 1.</title>
        <authorList>
            <person name="Sasaki T."/>
            <person name="Matsumoto T."/>
            <person name="Yamamoto K."/>
            <person name="Sakata K."/>
            <person name="Baba T."/>
            <person name="Katayose Y."/>
            <person name="Wu J."/>
            <person name="Niimura Y."/>
            <person name="Cheng Z."/>
            <person name="Nagamura Y."/>
            <person name="Antonio B.A."/>
            <person name="Kanamori H."/>
            <person name="Hosokawa S."/>
            <person name="Masukawa M."/>
            <person name="Arikawa K."/>
            <person name="Chiden Y."/>
            <person name="Hayashi M."/>
            <person name="Okamoto M."/>
            <person name="Ando T."/>
            <person name="Aoki H."/>
            <person name="Arita K."/>
            <person name="Hamada M."/>
            <person name="Harada C."/>
            <person name="Hijishita S."/>
            <person name="Honda M."/>
            <person name="Ichikawa Y."/>
            <person name="Idonuma A."/>
            <person name="Iijima M."/>
            <person name="Ikeda M."/>
            <person name="Ikeno M."/>
            <person name="Ito S."/>
            <person name="Ito T."/>
            <person name="Ito Y."/>
            <person name="Ito Y."/>
            <person name="Iwabuchi A."/>
            <person name="Kamiya K."/>
            <person name="Karasawa W."/>
            <person name="Katagiri S."/>
            <person name="Kikuta A."/>
            <person name="Kobayashi N."/>
            <person name="Kono I."/>
            <person name="Machita K."/>
            <person name="Maehara T."/>
            <person name="Mizuno H."/>
            <person name="Mizubayashi T."/>
            <person name="Mukai Y."/>
            <person name="Nagasaki H."/>
            <person name="Nakashima M."/>
            <person name="Nakama Y."/>
            <person name="Nakamichi Y."/>
            <person name="Nakamura M."/>
            <person name="Namiki N."/>
            <person name="Negishi M."/>
            <person name="Ohta I."/>
            <person name="Ono N."/>
            <person name="Saji S."/>
            <person name="Sakai K."/>
            <person name="Shibata M."/>
            <person name="Shimokawa T."/>
            <person name="Shomura A."/>
            <person name="Song J."/>
            <person name="Takazaki Y."/>
            <person name="Terasawa K."/>
            <person name="Tsuji K."/>
            <person name="Waki K."/>
            <person name="Yamagata H."/>
            <person name="Yamane H."/>
            <person name="Yoshiki S."/>
            <person name="Yoshihara R."/>
            <person name="Yukawa K."/>
            <person name="Zhong H."/>
            <person name="Iwama H."/>
            <person name="Endo T."/>
            <person name="Ito H."/>
            <person name="Hahn J.H."/>
            <person name="Kim H.-I."/>
            <person name="Eun M.-Y."/>
            <person name="Yano M."/>
            <person name="Jiang J."/>
            <person name="Gojobori T."/>
        </authorList>
    </citation>
    <scope>NUCLEOTIDE SEQUENCE [LARGE SCALE GENOMIC DNA]</scope>
    <source>
        <strain>cv. Nipponbare</strain>
    </source>
</reference>
<reference key="6">
    <citation type="journal article" date="2005" name="Nature">
        <title>The map-based sequence of the rice genome.</title>
        <authorList>
            <consortium name="International rice genome sequencing project (IRGSP)"/>
        </authorList>
    </citation>
    <scope>NUCLEOTIDE SEQUENCE [LARGE SCALE GENOMIC DNA]</scope>
    <source>
        <strain>cv. Nipponbare</strain>
    </source>
</reference>
<reference key="7">
    <citation type="journal article" date="2008" name="Nucleic Acids Res.">
        <title>The rice annotation project database (RAP-DB): 2008 update.</title>
        <authorList>
            <consortium name="The rice annotation project (RAP)"/>
        </authorList>
    </citation>
    <scope>GENOME REANNOTATION</scope>
    <source>
        <strain>cv. Nipponbare</strain>
    </source>
</reference>
<reference key="8">
    <citation type="journal article" date="2013" name="Rice">
        <title>Improvement of the Oryza sativa Nipponbare reference genome using next generation sequence and optical map data.</title>
        <authorList>
            <person name="Kawahara Y."/>
            <person name="de la Bastide M."/>
            <person name="Hamilton J.P."/>
            <person name="Kanamori H."/>
            <person name="McCombie W.R."/>
            <person name="Ouyang S."/>
            <person name="Schwartz D.C."/>
            <person name="Tanaka T."/>
            <person name="Wu J."/>
            <person name="Zhou S."/>
            <person name="Childs K.L."/>
            <person name="Davidson R.M."/>
            <person name="Lin H."/>
            <person name="Quesada-Ocampo L."/>
            <person name="Vaillancourt B."/>
            <person name="Sakai H."/>
            <person name="Lee S.S."/>
            <person name="Kim J."/>
            <person name="Numa H."/>
            <person name="Itoh T."/>
            <person name="Buell C.R."/>
            <person name="Matsumoto T."/>
        </authorList>
    </citation>
    <scope>GENOME REANNOTATION</scope>
    <source>
        <strain>cv. Nipponbare</strain>
    </source>
</reference>
<reference key="9">
    <citation type="journal article" date="2003" name="Science">
        <title>Collection, mapping, and annotation of over 28,000 cDNA clones from japonica rice.</title>
        <authorList>
            <consortium name="The rice full-length cDNA consortium"/>
        </authorList>
    </citation>
    <scope>NUCLEOTIDE SEQUENCE [LARGE SCALE MRNA]</scope>
    <source>
        <strain>cv. Nipponbare</strain>
    </source>
</reference>
<feature type="chain" id="PRO_0000437243" description="Fructose-bisphosphate aldolase 3, cytoplasmic">
    <location>
        <begin position="1"/>
        <end position="358"/>
    </location>
</feature>
<feature type="active site" description="Proton acceptor" evidence="1">
    <location>
        <position position="183"/>
    </location>
</feature>
<feature type="active site" description="Schiff-base intermediate with dihydroxyacetone-P" evidence="1">
    <location>
        <position position="225"/>
    </location>
</feature>
<feature type="binding site" evidence="1">
    <location>
        <position position="39"/>
    </location>
    <ligand>
        <name>substrate</name>
    </ligand>
</feature>
<feature type="binding site" evidence="1">
    <location>
        <begin position="266"/>
        <end position="268"/>
    </location>
    <ligand>
        <name>substrate</name>
    </ligand>
</feature>
<feature type="binding site" evidence="1">
    <location>
        <position position="298"/>
    </location>
    <ligand>
        <name>substrate</name>
    </ligand>
</feature>
<feature type="site" description="Necessary for preference for fructose 1,6-bisphosphate over fructose 1-phosphate" evidence="1">
    <location>
        <position position="358"/>
    </location>
</feature>
<evidence type="ECO:0000250" key="1">
    <source>
        <dbReference type="UniProtKB" id="P00883"/>
    </source>
</evidence>
<evidence type="ECO:0000250" key="2">
    <source>
        <dbReference type="UniProtKB" id="Q944G9"/>
    </source>
</evidence>
<evidence type="ECO:0000250" key="3">
    <source>
        <dbReference type="UniProtKB" id="Q9SJQ9"/>
    </source>
</evidence>
<evidence type="ECO:0000303" key="4">
    <source>
    </source>
</evidence>
<evidence type="ECO:0000305" key="5"/>
<evidence type="ECO:0000312" key="6">
    <source>
        <dbReference type="EMBL" id="BAD82731.1"/>
    </source>
</evidence>
<evidence type="ECO:0000312" key="7">
    <source>
        <dbReference type="EMBL" id="BAF07044.2"/>
    </source>
</evidence>
<comment type="function">
    <text evidence="3">Fructose-bisphosphate aldolase that plays a key role in glycolysis and gluconeogenesis.</text>
</comment>
<comment type="catalytic activity">
    <reaction evidence="3">
        <text>beta-D-fructose 1,6-bisphosphate = D-glyceraldehyde 3-phosphate + dihydroxyacetone phosphate</text>
        <dbReference type="Rhea" id="RHEA:14729"/>
        <dbReference type="ChEBI" id="CHEBI:32966"/>
        <dbReference type="ChEBI" id="CHEBI:57642"/>
        <dbReference type="ChEBI" id="CHEBI:59776"/>
        <dbReference type="EC" id="4.1.2.13"/>
    </reaction>
</comment>
<comment type="pathway">
    <text evidence="5">Carbohydrate degradation; glycolysis; D-glyceraldehyde 3-phosphate and glycerone phosphate from D-glucose: step 4/4.</text>
</comment>
<comment type="subunit">
    <text evidence="2">Homotetramer.</text>
</comment>
<comment type="subcellular location">
    <subcellularLocation>
        <location evidence="3">Cytoplasm</location>
        <location evidence="3">Cytosol</location>
    </subcellularLocation>
</comment>
<comment type="similarity">
    <text evidence="5">Belongs to the class I fructose-bisphosphate aldolase family.</text>
</comment>
<accession>Q5N725</accession>
<accession>Q42476</accession>
<name>ALFC3_ORYSJ</name>
<gene>
    <name evidence="5" type="primary">FBA3</name>
    <name evidence="7" type="ordered locus">Os01g0905800</name>
    <name evidence="5" type="ordered locus">LOC_Os01g67860</name>
    <name evidence="6" type="ORF">B1417F08.1-1</name>
</gene>
<sequence length="358" mass="38823">MSAYCGKYKDELIKNAAYIGTPGKGILAADESTGTIGKRFASINVENVEENRRSLRELLFTTPGALQHLSGVILFEETLYQKTKDGKPFVDVLKEGGVLPGIKVDKGTVEVAGTNKETTTQGHDDLGKRCAKYYEAGARFAKWRAVLKIGPNEPSQLSIDLNAQGLARYAIICQENGLVPIVEPEILVDGSHDIERCAYVTEKVLAACYKALNEHHVLLEGSLLKPNMVTPGSESKKVSPQLIAEYTVRALQRTVPAAVPAIVFLSGGQSEEEATVNLNAMNKLSTKKPWALSFSFGRALQQSTLKAWGGKTENVVKAQKAFITRCKANSEATLGTYQGDAVLGEGASESLHVKDYKY</sequence>
<dbReference type="EC" id="4.1.2.13" evidence="3"/>
<dbReference type="EMBL" id="D50301">
    <property type="protein sequence ID" value="BAA08830.1"/>
    <property type="molecule type" value="mRNA"/>
</dbReference>
<dbReference type="EMBL" id="D50307">
    <property type="protein sequence ID" value="BAA08845.1"/>
    <property type="molecule type" value="Genomic_DNA"/>
</dbReference>
<dbReference type="EMBL" id="EF122473">
    <property type="protein sequence ID" value="ABL74560.1"/>
    <property type="molecule type" value="mRNA"/>
</dbReference>
<dbReference type="EMBL" id="GQ848028">
    <property type="protein sequence ID" value="ADM86841.1"/>
    <property type="molecule type" value="mRNA"/>
</dbReference>
<dbReference type="EMBL" id="JN208224">
    <property type="protein sequence ID" value="AEV58398.1"/>
    <property type="molecule type" value="mRNA"/>
</dbReference>
<dbReference type="EMBL" id="AP006531">
    <property type="protein sequence ID" value="BAD82731.1"/>
    <property type="molecule type" value="Genomic_DNA"/>
</dbReference>
<dbReference type="EMBL" id="AP008207">
    <property type="protein sequence ID" value="BAF07044.2"/>
    <property type="molecule type" value="Genomic_DNA"/>
</dbReference>
<dbReference type="EMBL" id="AP014957">
    <property type="protein sequence ID" value="BAS75791.1"/>
    <property type="molecule type" value="Genomic_DNA"/>
</dbReference>
<dbReference type="EMBL" id="AK104719">
    <property type="protein sequence ID" value="BAG96902.1"/>
    <property type="molecule type" value="mRNA"/>
</dbReference>
<dbReference type="PIR" id="S65073">
    <property type="entry name" value="S65073"/>
</dbReference>
<dbReference type="RefSeq" id="XP_015613809.1">
    <property type="nucleotide sequence ID" value="XM_015758323.1"/>
</dbReference>
<dbReference type="SMR" id="Q5N725"/>
<dbReference type="FunCoup" id="Q5N725">
    <property type="interactions" value="2028"/>
</dbReference>
<dbReference type="STRING" id="39947.Q5N725"/>
<dbReference type="CarbonylDB" id="Q5N725"/>
<dbReference type="PaxDb" id="39947-Q5N725"/>
<dbReference type="EnsemblPlants" id="Os01t0905800-01">
    <property type="protein sequence ID" value="Os01t0905800-01"/>
    <property type="gene ID" value="Os01g0905800"/>
</dbReference>
<dbReference type="EnsemblPlants" id="Os01t0905800-03">
    <property type="protein sequence ID" value="Os01t0905800-03"/>
    <property type="gene ID" value="Os01g0905800"/>
</dbReference>
<dbReference type="Gramene" id="Os01t0905800-01">
    <property type="protein sequence ID" value="Os01t0905800-01"/>
    <property type="gene ID" value="Os01g0905800"/>
</dbReference>
<dbReference type="Gramene" id="Os01t0905800-03">
    <property type="protein sequence ID" value="Os01t0905800-03"/>
    <property type="gene ID" value="Os01g0905800"/>
</dbReference>
<dbReference type="KEGG" id="dosa:Os01g0905800"/>
<dbReference type="eggNOG" id="KOG1557">
    <property type="taxonomic scope" value="Eukaryota"/>
</dbReference>
<dbReference type="HOGENOM" id="CLU_031243_0_2_1"/>
<dbReference type="InParanoid" id="Q5N725"/>
<dbReference type="OMA" id="FHQSTDK"/>
<dbReference type="OrthoDB" id="36455at2759"/>
<dbReference type="PlantReactome" id="R-OSA-1119519">
    <property type="pathway name" value="Calvin cycle"/>
</dbReference>
<dbReference type="PlantReactome" id="R-OSA-1119570">
    <property type="pathway name" value="Cytosolic glycolysis"/>
</dbReference>
<dbReference type="UniPathway" id="UPA00109">
    <property type="reaction ID" value="UER00183"/>
</dbReference>
<dbReference type="Proteomes" id="UP000000763">
    <property type="component" value="Chromosome 1"/>
</dbReference>
<dbReference type="Proteomes" id="UP000059680">
    <property type="component" value="Chromosome 1"/>
</dbReference>
<dbReference type="ExpressionAtlas" id="Q5N725">
    <property type="expression patterns" value="baseline and differential"/>
</dbReference>
<dbReference type="GO" id="GO:0005829">
    <property type="term" value="C:cytosol"/>
    <property type="evidence" value="ECO:0000318"/>
    <property type="project" value="GO_Central"/>
</dbReference>
<dbReference type="GO" id="GO:0004332">
    <property type="term" value="F:fructose-bisphosphate aldolase activity"/>
    <property type="evidence" value="ECO:0000250"/>
    <property type="project" value="UniProtKB"/>
</dbReference>
<dbReference type="GO" id="GO:0030388">
    <property type="term" value="P:fructose 1,6-bisphosphate metabolic process"/>
    <property type="evidence" value="ECO:0000318"/>
    <property type="project" value="GO_Central"/>
</dbReference>
<dbReference type="GO" id="GO:0006094">
    <property type="term" value="P:gluconeogenesis"/>
    <property type="evidence" value="ECO:0000250"/>
    <property type="project" value="UniProtKB"/>
</dbReference>
<dbReference type="GO" id="GO:0006096">
    <property type="term" value="P:glycolytic process"/>
    <property type="evidence" value="ECO:0000250"/>
    <property type="project" value="UniProtKB"/>
</dbReference>
<dbReference type="CDD" id="cd00948">
    <property type="entry name" value="FBP_aldolase_I_a"/>
    <property type="match status" value="1"/>
</dbReference>
<dbReference type="FunFam" id="3.20.20.70:FF:000068">
    <property type="entry name" value="Fructose-bisphosphate aldolase"/>
    <property type="match status" value="1"/>
</dbReference>
<dbReference type="Gene3D" id="3.20.20.70">
    <property type="entry name" value="Aldolase class I"/>
    <property type="match status" value="1"/>
</dbReference>
<dbReference type="InterPro" id="IPR029768">
    <property type="entry name" value="Aldolase_I_AS"/>
</dbReference>
<dbReference type="InterPro" id="IPR013785">
    <property type="entry name" value="Aldolase_TIM"/>
</dbReference>
<dbReference type="InterPro" id="IPR000741">
    <property type="entry name" value="FBA_I"/>
</dbReference>
<dbReference type="NCBIfam" id="NF033379">
    <property type="entry name" value="FrucBisAld_I"/>
    <property type="match status" value="1"/>
</dbReference>
<dbReference type="PANTHER" id="PTHR11627">
    <property type="entry name" value="FRUCTOSE-BISPHOSPHATE ALDOLASE"/>
    <property type="match status" value="1"/>
</dbReference>
<dbReference type="Pfam" id="PF00274">
    <property type="entry name" value="Glycolytic"/>
    <property type="match status" value="1"/>
</dbReference>
<dbReference type="SUPFAM" id="SSF51569">
    <property type="entry name" value="Aldolase"/>
    <property type="match status" value="1"/>
</dbReference>
<dbReference type="PROSITE" id="PS00158">
    <property type="entry name" value="ALDOLASE_CLASS_I"/>
    <property type="match status" value="1"/>
</dbReference>
<protein>
    <recommendedName>
        <fullName evidence="5">Fructose-bisphosphate aldolase 3, cytoplasmic</fullName>
        <ecNumber evidence="3">4.1.2.13</ecNumber>
    </recommendedName>
    <alternativeName>
        <fullName evidence="4">Aldolase C-1</fullName>
        <shortName evidence="4">AldC-1</shortName>
    </alternativeName>
</protein>
<organism>
    <name type="scientific">Oryza sativa subsp. japonica</name>
    <name type="common">Rice</name>
    <dbReference type="NCBI Taxonomy" id="39947"/>
    <lineage>
        <taxon>Eukaryota</taxon>
        <taxon>Viridiplantae</taxon>
        <taxon>Streptophyta</taxon>
        <taxon>Embryophyta</taxon>
        <taxon>Tracheophyta</taxon>
        <taxon>Spermatophyta</taxon>
        <taxon>Magnoliopsida</taxon>
        <taxon>Liliopsida</taxon>
        <taxon>Poales</taxon>
        <taxon>Poaceae</taxon>
        <taxon>BOP clade</taxon>
        <taxon>Oryzoideae</taxon>
        <taxon>Oryzeae</taxon>
        <taxon>Oryzinae</taxon>
        <taxon>Oryza</taxon>
        <taxon>Oryza sativa</taxon>
    </lineage>
</organism>
<keyword id="KW-0963">Cytoplasm</keyword>
<keyword id="KW-0324">Glycolysis</keyword>
<keyword id="KW-0456">Lyase</keyword>
<keyword id="KW-1185">Reference proteome</keyword>
<keyword id="KW-0704">Schiff base</keyword>